<sequence length="361" mass="39824">MSKRAYNFCAGPAALPEAVLQRAQGELLDWHGKGLSVMEMSHRSDEFVSIATKAEQDLRDLLGIPSHYKVLFLQGGASQQFAQIPLNLLPEDGTADYIDTGIWGQKAIEEASRYGHVNVAGTAKPYDYFAIPGQNEWKLSKDAAYVHYVANETIGGLEFDWVPEVGDVPLVCDMSSDILSRPIDVSKYGMIYAGAQKNIGPSGILVNIIREDLLGRARSLCPTMLNYKVAADNGSMYNTPPAFAWYLSGLVFEWLKEQGGVAAMGKLNEEKKRTLYDFIDASGLYSNPINLTDRSWMNVPFRLADDRLDKPFLAGADERGLLNLKGHRSVGGMRASIYNAVDINAIKALIAYMAEFEKEHG</sequence>
<keyword id="KW-0028">Amino-acid biosynthesis</keyword>
<keyword id="KW-0032">Aminotransferase</keyword>
<keyword id="KW-0963">Cytoplasm</keyword>
<keyword id="KW-0663">Pyridoxal phosphate</keyword>
<keyword id="KW-0664">Pyridoxine biosynthesis</keyword>
<keyword id="KW-0718">Serine biosynthesis</keyword>
<keyword id="KW-0808">Transferase</keyword>
<dbReference type="EC" id="2.6.1.52" evidence="1"/>
<dbReference type="EMBL" id="AM181176">
    <property type="protein sequence ID" value="CAY47893.1"/>
    <property type="molecule type" value="Genomic_DNA"/>
</dbReference>
<dbReference type="RefSeq" id="WP_012722929.1">
    <property type="nucleotide sequence ID" value="NC_012660.1"/>
</dbReference>
<dbReference type="SMR" id="C3K6J5"/>
<dbReference type="STRING" id="294.SRM1_04024"/>
<dbReference type="GeneID" id="93463330"/>
<dbReference type="eggNOG" id="COG1932">
    <property type="taxonomic scope" value="Bacteria"/>
</dbReference>
<dbReference type="HOGENOM" id="CLU_034866_0_2_6"/>
<dbReference type="OrthoDB" id="9809412at2"/>
<dbReference type="UniPathway" id="UPA00135">
    <property type="reaction ID" value="UER00197"/>
</dbReference>
<dbReference type="UniPathway" id="UPA00244">
    <property type="reaction ID" value="UER00311"/>
</dbReference>
<dbReference type="GO" id="GO:0005737">
    <property type="term" value="C:cytoplasm"/>
    <property type="evidence" value="ECO:0007669"/>
    <property type="project" value="UniProtKB-SubCell"/>
</dbReference>
<dbReference type="GO" id="GO:0004648">
    <property type="term" value="F:O-phospho-L-serine:2-oxoglutarate aminotransferase activity"/>
    <property type="evidence" value="ECO:0007669"/>
    <property type="project" value="UniProtKB-UniRule"/>
</dbReference>
<dbReference type="GO" id="GO:0030170">
    <property type="term" value="F:pyridoxal phosphate binding"/>
    <property type="evidence" value="ECO:0007669"/>
    <property type="project" value="UniProtKB-UniRule"/>
</dbReference>
<dbReference type="GO" id="GO:0006564">
    <property type="term" value="P:L-serine biosynthetic process"/>
    <property type="evidence" value="ECO:0007669"/>
    <property type="project" value="UniProtKB-UniRule"/>
</dbReference>
<dbReference type="GO" id="GO:0008615">
    <property type="term" value="P:pyridoxine biosynthetic process"/>
    <property type="evidence" value="ECO:0007669"/>
    <property type="project" value="UniProtKB-UniRule"/>
</dbReference>
<dbReference type="CDD" id="cd00611">
    <property type="entry name" value="PSAT_like"/>
    <property type="match status" value="1"/>
</dbReference>
<dbReference type="FunFam" id="3.40.640.10:FF:000010">
    <property type="entry name" value="Phosphoserine aminotransferase"/>
    <property type="match status" value="1"/>
</dbReference>
<dbReference type="FunFam" id="3.90.1150.10:FF:000006">
    <property type="entry name" value="Phosphoserine aminotransferase"/>
    <property type="match status" value="1"/>
</dbReference>
<dbReference type="Gene3D" id="3.90.1150.10">
    <property type="entry name" value="Aspartate Aminotransferase, domain 1"/>
    <property type="match status" value="1"/>
</dbReference>
<dbReference type="Gene3D" id="3.40.640.10">
    <property type="entry name" value="Type I PLP-dependent aspartate aminotransferase-like (Major domain)"/>
    <property type="match status" value="1"/>
</dbReference>
<dbReference type="HAMAP" id="MF_00160">
    <property type="entry name" value="SerC_aminotrans_5"/>
    <property type="match status" value="1"/>
</dbReference>
<dbReference type="InterPro" id="IPR000192">
    <property type="entry name" value="Aminotrans_V_dom"/>
</dbReference>
<dbReference type="InterPro" id="IPR022278">
    <property type="entry name" value="Pser_aminoTfrase"/>
</dbReference>
<dbReference type="InterPro" id="IPR015424">
    <property type="entry name" value="PyrdxlP-dep_Trfase"/>
</dbReference>
<dbReference type="InterPro" id="IPR015421">
    <property type="entry name" value="PyrdxlP-dep_Trfase_major"/>
</dbReference>
<dbReference type="InterPro" id="IPR015422">
    <property type="entry name" value="PyrdxlP-dep_Trfase_small"/>
</dbReference>
<dbReference type="NCBIfam" id="NF003764">
    <property type="entry name" value="PRK05355.1"/>
    <property type="match status" value="1"/>
</dbReference>
<dbReference type="NCBIfam" id="TIGR01364">
    <property type="entry name" value="serC_1"/>
    <property type="match status" value="1"/>
</dbReference>
<dbReference type="PANTHER" id="PTHR43247">
    <property type="entry name" value="PHOSPHOSERINE AMINOTRANSFERASE"/>
    <property type="match status" value="1"/>
</dbReference>
<dbReference type="PANTHER" id="PTHR43247:SF1">
    <property type="entry name" value="PHOSPHOSERINE AMINOTRANSFERASE"/>
    <property type="match status" value="1"/>
</dbReference>
<dbReference type="Pfam" id="PF00266">
    <property type="entry name" value="Aminotran_5"/>
    <property type="match status" value="1"/>
</dbReference>
<dbReference type="PIRSF" id="PIRSF000525">
    <property type="entry name" value="SerC"/>
    <property type="match status" value="1"/>
</dbReference>
<dbReference type="SUPFAM" id="SSF53383">
    <property type="entry name" value="PLP-dependent transferases"/>
    <property type="match status" value="1"/>
</dbReference>
<protein>
    <recommendedName>
        <fullName evidence="1">Phosphoserine aminotransferase</fullName>
        <ecNumber evidence="1">2.6.1.52</ecNumber>
    </recommendedName>
    <alternativeName>
        <fullName evidence="1">Phosphohydroxythreonine aminotransferase</fullName>
        <shortName evidence="1">PSAT</shortName>
    </alternativeName>
</protein>
<reference key="1">
    <citation type="journal article" date="2009" name="Genome Biol.">
        <title>Genomic and genetic analyses of diversity and plant interactions of Pseudomonas fluorescens.</title>
        <authorList>
            <person name="Silby M.W."/>
            <person name="Cerdeno-Tarraga A.M."/>
            <person name="Vernikos G.S."/>
            <person name="Giddens S.R."/>
            <person name="Jackson R.W."/>
            <person name="Preston G.M."/>
            <person name="Zhang X.-X."/>
            <person name="Moon C.D."/>
            <person name="Gehrig S.M."/>
            <person name="Godfrey S.A.C."/>
            <person name="Knight C.G."/>
            <person name="Malone J.G."/>
            <person name="Robinson Z."/>
            <person name="Spiers A.J."/>
            <person name="Harris S."/>
            <person name="Challis G.L."/>
            <person name="Yaxley A.M."/>
            <person name="Harris D."/>
            <person name="Seeger K."/>
            <person name="Murphy L."/>
            <person name="Rutter S."/>
            <person name="Squares R."/>
            <person name="Quail M.A."/>
            <person name="Saunders E."/>
            <person name="Mavromatis K."/>
            <person name="Brettin T.S."/>
            <person name="Bentley S.D."/>
            <person name="Hothersall J."/>
            <person name="Stephens E."/>
            <person name="Thomas C.M."/>
            <person name="Parkhill J."/>
            <person name="Levy S.B."/>
            <person name="Rainey P.B."/>
            <person name="Thomson N.R."/>
        </authorList>
    </citation>
    <scope>NUCLEOTIDE SEQUENCE [LARGE SCALE GENOMIC DNA]</scope>
    <source>
        <strain>SBW25</strain>
    </source>
</reference>
<feature type="chain" id="PRO_1000203548" description="Phosphoserine aminotransferase">
    <location>
        <begin position="1"/>
        <end position="361"/>
    </location>
</feature>
<feature type="binding site" evidence="1">
    <location>
        <position position="43"/>
    </location>
    <ligand>
        <name>L-glutamate</name>
        <dbReference type="ChEBI" id="CHEBI:29985"/>
    </ligand>
</feature>
<feature type="binding site" evidence="1">
    <location>
        <begin position="77"/>
        <end position="78"/>
    </location>
    <ligand>
        <name>pyridoxal 5'-phosphate</name>
        <dbReference type="ChEBI" id="CHEBI:597326"/>
    </ligand>
</feature>
<feature type="binding site" evidence="1">
    <location>
        <position position="103"/>
    </location>
    <ligand>
        <name>pyridoxal 5'-phosphate</name>
        <dbReference type="ChEBI" id="CHEBI:597326"/>
    </ligand>
</feature>
<feature type="binding site" evidence="1">
    <location>
        <position position="153"/>
    </location>
    <ligand>
        <name>pyridoxal 5'-phosphate</name>
        <dbReference type="ChEBI" id="CHEBI:597326"/>
    </ligand>
</feature>
<feature type="binding site" evidence="1">
    <location>
        <position position="173"/>
    </location>
    <ligand>
        <name>pyridoxal 5'-phosphate</name>
        <dbReference type="ChEBI" id="CHEBI:597326"/>
    </ligand>
</feature>
<feature type="binding site" evidence="1">
    <location>
        <position position="196"/>
    </location>
    <ligand>
        <name>pyridoxal 5'-phosphate</name>
        <dbReference type="ChEBI" id="CHEBI:597326"/>
    </ligand>
</feature>
<feature type="binding site" evidence="1">
    <location>
        <begin position="238"/>
        <end position="239"/>
    </location>
    <ligand>
        <name>pyridoxal 5'-phosphate</name>
        <dbReference type="ChEBI" id="CHEBI:597326"/>
    </ligand>
</feature>
<feature type="modified residue" description="N6-(pyridoxal phosphate)lysine" evidence="1">
    <location>
        <position position="197"/>
    </location>
</feature>
<organism>
    <name type="scientific">Pseudomonas fluorescens (strain SBW25)</name>
    <dbReference type="NCBI Taxonomy" id="216595"/>
    <lineage>
        <taxon>Bacteria</taxon>
        <taxon>Pseudomonadati</taxon>
        <taxon>Pseudomonadota</taxon>
        <taxon>Gammaproteobacteria</taxon>
        <taxon>Pseudomonadales</taxon>
        <taxon>Pseudomonadaceae</taxon>
        <taxon>Pseudomonas</taxon>
    </lineage>
</organism>
<accession>C3K6J5</accession>
<comment type="function">
    <text evidence="1">Catalyzes the reversible conversion of 3-phosphohydroxypyruvate to phosphoserine and of 3-hydroxy-2-oxo-4-phosphonooxybutanoate to phosphohydroxythreonine.</text>
</comment>
<comment type="catalytic activity">
    <reaction evidence="1">
        <text>O-phospho-L-serine + 2-oxoglutarate = 3-phosphooxypyruvate + L-glutamate</text>
        <dbReference type="Rhea" id="RHEA:14329"/>
        <dbReference type="ChEBI" id="CHEBI:16810"/>
        <dbReference type="ChEBI" id="CHEBI:18110"/>
        <dbReference type="ChEBI" id="CHEBI:29985"/>
        <dbReference type="ChEBI" id="CHEBI:57524"/>
        <dbReference type="EC" id="2.6.1.52"/>
    </reaction>
</comment>
<comment type="catalytic activity">
    <reaction evidence="1">
        <text>4-(phosphooxy)-L-threonine + 2-oxoglutarate = (R)-3-hydroxy-2-oxo-4-phosphooxybutanoate + L-glutamate</text>
        <dbReference type="Rhea" id="RHEA:16573"/>
        <dbReference type="ChEBI" id="CHEBI:16810"/>
        <dbReference type="ChEBI" id="CHEBI:29985"/>
        <dbReference type="ChEBI" id="CHEBI:58452"/>
        <dbReference type="ChEBI" id="CHEBI:58538"/>
        <dbReference type="EC" id="2.6.1.52"/>
    </reaction>
</comment>
<comment type="cofactor">
    <cofactor evidence="1">
        <name>pyridoxal 5'-phosphate</name>
        <dbReference type="ChEBI" id="CHEBI:597326"/>
    </cofactor>
    <text evidence="1">Binds 1 pyridoxal phosphate per subunit.</text>
</comment>
<comment type="pathway">
    <text evidence="1">Amino-acid biosynthesis; L-serine biosynthesis; L-serine from 3-phospho-D-glycerate: step 2/3.</text>
</comment>
<comment type="pathway">
    <text evidence="1">Cofactor biosynthesis; pyridoxine 5'-phosphate biosynthesis; pyridoxine 5'-phosphate from D-erythrose 4-phosphate: step 3/5.</text>
</comment>
<comment type="subunit">
    <text evidence="1">Homodimer.</text>
</comment>
<comment type="subcellular location">
    <subcellularLocation>
        <location evidence="1">Cytoplasm</location>
    </subcellularLocation>
</comment>
<comment type="similarity">
    <text evidence="1">Belongs to the class-V pyridoxal-phosphate-dependent aminotransferase family. SerC subfamily.</text>
</comment>
<proteinExistence type="inferred from homology"/>
<evidence type="ECO:0000255" key="1">
    <source>
        <dbReference type="HAMAP-Rule" id="MF_00160"/>
    </source>
</evidence>
<gene>
    <name evidence="1" type="primary">serC</name>
    <name type="ordered locus">PFLU_1644</name>
</gene>
<name>SERC_PSEFS</name>